<organism>
    <name type="scientific">Arabidopsis thaliana</name>
    <name type="common">Mouse-ear cress</name>
    <dbReference type="NCBI Taxonomy" id="3702"/>
    <lineage>
        <taxon>Eukaryota</taxon>
        <taxon>Viridiplantae</taxon>
        <taxon>Streptophyta</taxon>
        <taxon>Embryophyta</taxon>
        <taxon>Tracheophyta</taxon>
        <taxon>Spermatophyta</taxon>
        <taxon>Magnoliopsida</taxon>
        <taxon>eudicotyledons</taxon>
        <taxon>Gunneridae</taxon>
        <taxon>Pentapetalae</taxon>
        <taxon>rosids</taxon>
        <taxon>malvids</taxon>
        <taxon>Brassicales</taxon>
        <taxon>Brassicaceae</taxon>
        <taxon>Camelineae</taxon>
        <taxon>Arabidopsis</taxon>
    </lineage>
</organism>
<reference key="1">
    <citation type="journal article" date="1999" name="Nature">
        <title>Sequence and analysis of chromosome 4 of the plant Arabidopsis thaliana.</title>
        <authorList>
            <person name="Mayer K.F.X."/>
            <person name="Schueller C."/>
            <person name="Wambutt R."/>
            <person name="Murphy G."/>
            <person name="Volckaert G."/>
            <person name="Pohl T."/>
            <person name="Duesterhoeft A."/>
            <person name="Stiekema W."/>
            <person name="Entian K.-D."/>
            <person name="Terryn N."/>
            <person name="Harris B."/>
            <person name="Ansorge W."/>
            <person name="Brandt P."/>
            <person name="Grivell L.A."/>
            <person name="Rieger M."/>
            <person name="Weichselgartner M."/>
            <person name="de Simone V."/>
            <person name="Obermaier B."/>
            <person name="Mache R."/>
            <person name="Mueller M."/>
            <person name="Kreis M."/>
            <person name="Delseny M."/>
            <person name="Puigdomenech P."/>
            <person name="Watson M."/>
            <person name="Schmidtheini T."/>
            <person name="Reichert B."/>
            <person name="Portetelle D."/>
            <person name="Perez-Alonso M."/>
            <person name="Boutry M."/>
            <person name="Bancroft I."/>
            <person name="Vos P."/>
            <person name="Hoheisel J."/>
            <person name="Zimmermann W."/>
            <person name="Wedler H."/>
            <person name="Ridley P."/>
            <person name="Langham S.-A."/>
            <person name="McCullagh B."/>
            <person name="Bilham L."/>
            <person name="Robben J."/>
            <person name="van der Schueren J."/>
            <person name="Grymonprez B."/>
            <person name="Chuang Y.-J."/>
            <person name="Vandenbussche F."/>
            <person name="Braeken M."/>
            <person name="Weltjens I."/>
            <person name="Voet M."/>
            <person name="Bastiaens I."/>
            <person name="Aert R."/>
            <person name="Defoor E."/>
            <person name="Weitzenegger T."/>
            <person name="Bothe G."/>
            <person name="Ramsperger U."/>
            <person name="Hilbert H."/>
            <person name="Braun M."/>
            <person name="Holzer E."/>
            <person name="Brandt A."/>
            <person name="Peters S."/>
            <person name="van Staveren M."/>
            <person name="Dirkse W."/>
            <person name="Mooijman P."/>
            <person name="Klein Lankhorst R."/>
            <person name="Rose M."/>
            <person name="Hauf J."/>
            <person name="Koetter P."/>
            <person name="Berneiser S."/>
            <person name="Hempel S."/>
            <person name="Feldpausch M."/>
            <person name="Lamberth S."/>
            <person name="Van den Daele H."/>
            <person name="De Keyser A."/>
            <person name="Buysshaert C."/>
            <person name="Gielen J."/>
            <person name="Villarroel R."/>
            <person name="De Clercq R."/>
            <person name="van Montagu M."/>
            <person name="Rogers J."/>
            <person name="Cronin A."/>
            <person name="Quail M.A."/>
            <person name="Bray-Allen S."/>
            <person name="Clark L."/>
            <person name="Doggett J."/>
            <person name="Hall S."/>
            <person name="Kay M."/>
            <person name="Lennard N."/>
            <person name="McLay K."/>
            <person name="Mayes R."/>
            <person name="Pettett A."/>
            <person name="Rajandream M.A."/>
            <person name="Lyne M."/>
            <person name="Benes V."/>
            <person name="Rechmann S."/>
            <person name="Borkova D."/>
            <person name="Bloecker H."/>
            <person name="Scharfe M."/>
            <person name="Grimm M."/>
            <person name="Loehnert T.-H."/>
            <person name="Dose S."/>
            <person name="de Haan M."/>
            <person name="Maarse A.C."/>
            <person name="Schaefer M."/>
            <person name="Mueller-Auer S."/>
            <person name="Gabel C."/>
            <person name="Fuchs M."/>
            <person name="Fartmann B."/>
            <person name="Granderath K."/>
            <person name="Dauner D."/>
            <person name="Herzl A."/>
            <person name="Neumann S."/>
            <person name="Argiriou A."/>
            <person name="Vitale D."/>
            <person name="Liguori R."/>
            <person name="Piravandi E."/>
            <person name="Massenet O."/>
            <person name="Quigley F."/>
            <person name="Clabauld G."/>
            <person name="Muendlein A."/>
            <person name="Felber R."/>
            <person name="Schnabl S."/>
            <person name="Hiller R."/>
            <person name="Schmidt W."/>
            <person name="Lecharny A."/>
            <person name="Aubourg S."/>
            <person name="Chefdor F."/>
            <person name="Cooke R."/>
            <person name="Berger C."/>
            <person name="Monfort A."/>
            <person name="Casacuberta E."/>
            <person name="Gibbons T."/>
            <person name="Weber N."/>
            <person name="Vandenbol M."/>
            <person name="Bargues M."/>
            <person name="Terol J."/>
            <person name="Torres A."/>
            <person name="Perez-Perez A."/>
            <person name="Purnelle B."/>
            <person name="Bent E."/>
            <person name="Johnson S."/>
            <person name="Tacon D."/>
            <person name="Jesse T."/>
            <person name="Heijnen L."/>
            <person name="Schwarz S."/>
            <person name="Scholler P."/>
            <person name="Heber S."/>
            <person name="Francs P."/>
            <person name="Bielke C."/>
            <person name="Frishman D."/>
            <person name="Haase D."/>
            <person name="Lemcke K."/>
            <person name="Mewes H.-W."/>
            <person name="Stocker S."/>
            <person name="Zaccaria P."/>
            <person name="Bevan M."/>
            <person name="Wilson R.K."/>
            <person name="de la Bastide M."/>
            <person name="Habermann K."/>
            <person name="Parnell L."/>
            <person name="Dedhia N."/>
            <person name="Gnoj L."/>
            <person name="Schutz K."/>
            <person name="Huang E."/>
            <person name="Spiegel L."/>
            <person name="Sekhon M."/>
            <person name="Murray J."/>
            <person name="Sheet P."/>
            <person name="Cordes M."/>
            <person name="Abu-Threideh J."/>
            <person name="Stoneking T."/>
            <person name="Kalicki J."/>
            <person name="Graves T."/>
            <person name="Harmon G."/>
            <person name="Edwards J."/>
            <person name="Latreille P."/>
            <person name="Courtney L."/>
            <person name="Cloud J."/>
            <person name="Abbott A."/>
            <person name="Scott K."/>
            <person name="Johnson D."/>
            <person name="Minx P."/>
            <person name="Bentley D."/>
            <person name="Fulton B."/>
            <person name="Miller N."/>
            <person name="Greco T."/>
            <person name="Kemp K."/>
            <person name="Kramer J."/>
            <person name="Fulton L."/>
            <person name="Mardis E."/>
            <person name="Dante M."/>
            <person name="Pepin K."/>
            <person name="Hillier L.W."/>
            <person name="Nelson J."/>
            <person name="Spieth J."/>
            <person name="Ryan E."/>
            <person name="Andrews S."/>
            <person name="Geisel C."/>
            <person name="Layman D."/>
            <person name="Du H."/>
            <person name="Ali J."/>
            <person name="Berghoff A."/>
            <person name="Jones K."/>
            <person name="Drone K."/>
            <person name="Cotton M."/>
            <person name="Joshu C."/>
            <person name="Antonoiu B."/>
            <person name="Zidanic M."/>
            <person name="Strong C."/>
            <person name="Sun H."/>
            <person name="Lamar B."/>
            <person name="Yordan C."/>
            <person name="Ma P."/>
            <person name="Zhong J."/>
            <person name="Preston R."/>
            <person name="Vil D."/>
            <person name="Shekher M."/>
            <person name="Matero A."/>
            <person name="Shah R."/>
            <person name="Swaby I.K."/>
            <person name="O'Shaughnessy A."/>
            <person name="Rodriguez M."/>
            <person name="Hoffman J."/>
            <person name="Till S."/>
            <person name="Granat S."/>
            <person name="Shohdy N."/>
            <person name="Hasegawa A."/>
            <person name="Hameed A."/>
            <person name="Lodhi M."/>
            <person name="Johnson A."/>
            <person name="Chen E."/>
            <person name="Marra M.A."/>
            <person name="Martienssen R."/>
            <person name="McCombie W.R."/>
        </authorList>
    </citation>
    <scope>NUCLEOTIDE SEQUENCE [LARGE SCALE GENOMIC DNA]</scope>
    <source>
        <strain>cv. Columbia</strain>
    </source>
</reference>
<reference key="2">
    <citation type="journal article" date="2017" name="Plant J.">
        <title>Araport11: a complete reannotation of the Arabidopsis thaliana reference genome.</title>
        <authorList>
            <person name="Cheng C.Y."/>
            <person name="Krishnakumar V."/>
            <person name="Chan A.P."/>
            <person name="Thibaud-Nissen F."/>
            <person name="Schobel S."/>
            <person name="Town C.D."/>
        </authorList>
    </citation>
    <scope>GENOME REANNOTATION</scope>
    <source>
        <strain>cv. Columbia</strain>
    </source>
</reference>
<reference key="3">
    <citation type="journal article" date="2003" name="Science">
        <title>Empirical analysis of transcriptional activity in the Arabidopsis genome.</title>
        <authorList>
            <person name="Yamada K."/>
            <person name="Lim J."/>
            <person name="Dale J.M."/>
            <person name="Chen H."/>
            <person name="Shinn P."/>
            <person name="Palm C.J."/>
            <person name="Southwick A.M."/>
            <person name="Wu H.C."/>
            <person name="Kim C.J."/>
            <person name="Nguyen M."/>
            <person name="Pham P.K."/>
            <person name="Cheuk R.F."/>
            <person name="Karlin-Newmann G."/>
            <person name="Liu S.X."/>
            <person name="Lam B."/>
            <person name="Sakano H."/>
            <person name="Wu T."/>
            <person name="Yu G."/>
            <person name="Miranda M."/>
            <person name="Quach H.L."/>
            <person name="Tripp M."/>
            <person name="Chang C.H."/>
            <person name="Lee J.M."/>
            <person name="Toriumi M.J."/>
            <person name="Chan M.M."/>
            <person name="Tang C.C."/>
            <person name="Onodera C.S."/>
            <person name="Deng J.M."/>
            <person name="Akiyama K."/>
            <person name="Ansari Y."/>
            <person name="Arakawa T."/>
            <person name="Banh J."/>
            <person name="Banno F."/>
            <person name="Bowser L."/>
            <person name="Brooks S.Y."/>
            <person name="Carninci P."/>
            <person name="Chao Q."/>
            <person name="Choy N."/>
            <person name="Enju A."/>
            <person name="Goldsmith A.D."/>
            <person name="Gurjal M."/>
            <person name="Hansen N.F."/>
            <person name="Hayashizaki Y."/>
            <person name="Johnson-Hopson C."/>
            <person name="Hsuan V.W."/>
            <person name="Iida K."/>
            <person name="Karnes M."/>
            <person name="Khan S."/>
            <person name="Koesema E."/>
            <person name="Ishida J."/>
            <person name="Jiang P.X."/>
            <person name="Jones T."/>
            <person name="Kawai J."/>
            <person name="Kamiya A."/>
            <person name="Meyers C."/>
            <person name="Nakajima M."/>
            <person name="Narusaka M."/>
            <person name="Seki M."/>
            <person name="Sakurai T."/>
            <person name="Satou M."/>
            <person name="Tamse R."/>
            <person name="Vaysberg M."/>
            <person name="Wallender E.K."/>
            <person name="Wong C."/>
            <person name="Yamamura Y."/>
            <person name="Yuan S."/>
            <person name="Shinozaki K."/>
            <person name="Davis R.W."/>
            <person name="Theologis A."/>
            <person name="Ecker J.R."/>
        </authorList>
    </citation>
    <scope>NUCLEOTIDE SEQUENCE [LARGE SCALE MRNA]</scope>
    <source>
        <strain>cv. Columbia</strain>
    </source>
</reference>
<reference key="4">
    <citation type="journal article" date="2009" name="DNA Res.">
        <title>Analysis of multiple occurrences of alternative splicing events in Arabidopsis thaliana using novel sequenced full-length cDNAs.</title>
        <authorList>
            <person name="Iida K."/>
            <person name="Fukami-Kobayashi K."/>
            <person name="Toyoda A."/>
            <person name="Sakaki Y."/>
            <person name="Kobayashi M."/>
            <person name="Seki M."/>
            <person name="Shinozaki K."/>
        </authorList>
    </citation>
    <scope>NUCLEOTIDE SEQUENCE [LARGE SCALE MRNA]</scope>
    <source>
        <strain>cv. Columbia</strain>
    </source>
</reference>
<reference key="5">
    <citation type="journal article" date="2006" name="Development">
        <title>The Arabidopsis elch mutant reveals functions of an ESCRT component in cytokinesis.</title>
        <authorList>
            <person name="Spitzer C."/>
            <person name="Schellmann S."/>
            <person name="Sabovljevic A."/>
            <person name="Shahriari M."/>
            <person name="Keshavaiah C."/>
            <person name="Bechtold N."/>
            <person name="Herzog M."/>
            <person name="Mueller S."/>
            <person name="Hanisch F.-G."/>
            <person name="Huelskamp M."/>
        </authorList>
    </citation>
    <scope>IDENTIFICATION</scope>
    <scope>NOMENCLATURE</scope>
</reference>
<reference key="6">
    <citation type="journal article" date="2006" name="Trends Plant Sci.">
        <title>Exploring the ESCRTing machinery in eukaryotes.</title>
        <authorList>
            <person name="Winter V."/>
            <person name="Hauser M.-T."/>
        </authorList>
    </citation>
    <scope>IDENTIFICATION</scope>
</reference>
<name>VPS25_ARATH</name>
<keyword id="KW-0967">Endosome</keyword>
<keyword id="KW-0653">Protein transport</keyword>
<keyword id="KW-1185">Reference proteome</keyword>
<keyword id="KW-0813">Transport</keyword>
<sequence length="179" mass="20682">MQKLADFKLPQFFNYPPYFTLQPVRDTREKQIQLWKELILDYCKSQKIFLIGVEEDFPLFSNSAIDRSLSHEARETFLSAIVGEGRAEWLDKGHRKCLILWHRIQDWADIVLQFVRDNGLEDSVMTVEEIRSGTESLGTELQGIDRTILMRALKLLENKGKLALFKGTSADDEGVKFSV</sequence>
<protein>
    <recommendedName>
        <fullName>Vacuolar protein sorting-associated protein 25</fullName>
        <shortName>AtVPS25</shortName>
    </recommendedName>
    <alternativeName>
        <fullName>ESCRT-II complex subunit VPS25</fullName>
    </alternativeName>
</protein>
<evidence type="ECO:0000250" key="1"/>
<evidence type="ECO:0000305" key="2"/>
<proteinExistence type="evidence at protein level"/>
<feature type="chain" id="PRO_0000368193" description="Vacuolar protein sorting-associated protein 25">
    <location>
        <begin position="1"/>
        <end position="179"/>
    </location>
</feature>
<accession>Q8VZC9</accession>
<dbReference type="EMBL" id="AL161549">
    <property type="status" value="NOT_ANNOTATED_CDS"/>
    <property type="molecule type" value="Genomic_DNA"/>
</dbReference>
<dbReference type="EMBL" id="CP002687">
    <property type="protein sequence ID" value="AEE84122.1"/>
    <property type="molecule type" value="Genomic_DNA"/>
</dbReference>
<dbReference type="EMBL" id="CP002687">
    <property type="protein sequence ID" value="AEE84123.1"/>
    <property type="molecule type" value="Genomic_DNA"/>
</dbReference>
<dbReference type="EMBL" id="CP002687">
    <property type="protein sequence ID" value="ANM67992.1"/>
    <property type="molecule type" value="Genomic_DNA"/>
</dbReference>
<dbReference type="EMBL" id="CP002687">
    <property type="protein sequence ID" value="ANM67993.1"/>
    <property type="molecule type" value="Genomic_DNA"/>
</dbReference>
<dbReference type="EMBL" id="CP002687">
    <property type="protein sequence ID" value="ANM67994.1"/>
    <property type="molecule type" value="Genomic_DNA"/>
</dbReference>
<dbReference type="EMBL" id="CP002687">
    <property type="protein sequence ID" value="ANM67995.1"/>
    <property type="molecule type" value="Genomic_DNA"/>
</dbReference>
<dbReference type="EMBL" id="AY065055">
    <property type="protein sequence ID" value="AAL57689.1"/>
    <property type="molecule type" value="mRNA"/>
</dbReference>
<dbReference type="EMBL" id="AY093752">
    <property type="protein sequence ID" value="AAM10376.1"/>
    <property type="molecule type" value="mRNA"/>
</dbReference>
<dbReference type="EMBL" id="AK317105">
    <property type="protein sequence ID" value="BAH19794.1"/>
    <property type="molecule type" value="mRNA"/>
</dbReference>
<dbReference type="RefSeq" id="NP_001319990.1">
    <property type="nucleotide sequence ID" value="NM_001341314.1"/>
</dbReference>
<dbReference type="RefSeq" id="NP_001319991.1">
    <property type="nucleotide sequence ID" value="NM_001341313.1"/>
</dbReference>
<dbReference type="RefSeq" id="NP_001329780.1">
    <property type="nucleotide sequence ID" value="NM_001341316.1"/>
</dbReference>
<dbReference type="RefSeq" id="NP_001329781.1">
    <property type="nucleotide sequence ID" value="NM_001341315.1"/>
</dbReference>
<dbReference type="RefSeq" id="NP_680720.1">
    <property type="nucleotide sequence ID" value="NM_148354.4"/>
</dbReference>
<dbReference type="RefSeq" id="NP_974570.1">
    <property type="nucleotide sequence ID" value="NM_202841.2"/>
</dbReference>
<dbReference type="SMR" id="Q8VZC9"/>
<dbReference type="BioGRID" id="12930">
    <property type="interactions" value="6"/>
</dbReference>
<dbReference type="DIP" id="DIP-61574N"/>
<dbReference type="FunCoup" id="Q8VZC9">
    <property type="interactions" value="4238"/>
</dbReference>
<dbReference type="IntAct" id="Q8VZC9">
    <property type="interactions" value="5"/>
</dbReference>
<dbReference type="STRING" id="3702.Q8VZC9"/>
<dbReference type="TCDB" id="3.A.31.1.2">
    <property type="family name" value="the endosomal sorting complexes required for transport iii (escrt-iii) family"/>
</dbReference>
<dbReference type="PaxDb" id="3702-AT4G19003.2"/>
<dbReference type="ProteomicsDB" id="242671"/>
<dbReference type="DNASU" id="827637"/>
<dbReference type="EnsemblPlants" id="AT4G19003.1">
    <property type="protein sequence ID" value="AT4G19003.1"/>
    <property type="gene ID" value="AT4G19003"/>
</dbReference>
<dbReference type="EnsemblPlants" id="AT4G19003.2">
    <property type="protein sequence ID" value="AT4G19003.2"/>
    <property type="gene ID" value="AT4G19003"/>
</dbReference>
<dbReference type="EnsemblPlants" id="AT4G19003.3">
    <property type="protein sequence ID" value="AT4G19003.3"/>
    <property type="gene ID" value="AT4G19003"/>
</dbReference>
<dbReference type="EnsemblPlants" id="AT4G19003.4">
    <property type="protein sequence ID" value="AT4G19003.4"/>
    <property type="gene ID" value="AT4G19003"/>
</dbReference>
<dbReference type="EnsemblPlants" id="AT4G19003.5">
    <property type="protein sequence ID" value="AT4G19003.5"/>
    <property type="gene ID" value="AT4G19003"/>
</dbReference>
<dbReference type="EnsemblPlants" id="AT4G19003.6">
    <property type="protein sequence ID" value="AT4G19003.6"/>
    <property type="gene ID" value="AT4G19003"/>
</dbReference>
<dbReference type="GeneID" id="827637"/>
<dbReference type="Gramene" id="AT4G19003.1">
    <property type="protein sequence ID" value="AT4G19003.1"/>
    <property type="gene ID" value="AT4G19003"/>
</dbReference>
<dbReference type="Gramene" id="AT4G19003.2">
    <property type="protein sequence ID" value="AT4G19003.2"/>
    <property type="gene ID" value="AT4G19003"/>
</dbReference>
<dbReference type="Gramene" id="AT4G19003.3">
    <property type="protein sequence ID" value="AT4G19003.3"/>
    <property type="gene ID" value="AT4G19003"/>
</dbReference>
<dbReference type="Gramene" id="AT4G19003.4">
    <property type="protein sequence ID" value="AT4G19003.4"/>
    <property type="gene ID" value="AT4G19003"/>
</dbReference>
<dbReference type="Gramene" id="AT4G19003.5">
    <property type="protein sequence ID" value="AT4G19003.5"/>
    <property type="gene ID" value="AT4G19003"/>
</dbReference>
<dbReference type="Gramene" id="AT4G19003.6">
    <property type="protein sequence ID" value="AT4G19003.6"/>
    <property type="gene ID" value="AT4G19003"/>
</dbReference>
<dbReference type="KEGG" id="ath:AT4G19003"/>
<dbReference type="Araport" id="AT4G19003"/>
<dbReference type="TAIR" id="AT4G19003">
    <property type="gene designation" value="VPS25"/>
</dbReference>
<dbReference type="eggNOG" id="KOG4068">
    <property type="taxonomic scope" value="Eukaryota"/>
</dbReference>
<dbReference type="HOGENOM" id="CLU_087657_1_2_1"/>
<dbReference type="InParanoid" id="Q8VZC9"/>
<dbReference type="OMA" id="TRCLIMW"/>
<dbReference type="OrthoDB" id="245150at2759"/>
<dbReference type="PhylomeDB" id="Q8VZC9"/>
<dbReference type="PRO" id="PR:Q8VZC9"/>
<dbReference type="Proteomes" id="UP000006548">
    <property type="component" value="Chromosome 4"/>
</dbReference>
<dbReference type="ExpressionAtlas" id="Q8VZC9">
    <property type="expression patterns" value="baseline and differential"/>
</dbReference>
<dbReference type="GO" id="GO:0000814">
    <property type="term" value="C:ESCRT II complex"/>
    <property type="evidence" value="ECO:0000250"/>
    <property type="project" value="TAIR"/>
</dbReference>
<dbReference type="GO" id="GO:0071985">
    <property type="term" value="P:multivesicular body sorting pathway"/>
    <property type="evidence" value="ECO:0007669"/>
    <property type="project" value="InterPro"/>
</dbReference>
<dbReference type="GO" id="GO:0015031">
    <property type="term" value="P:protein transport"/>
    <property type="evidence" value="ECO:0007669"/>
    <property type="project" value="UniProtKB-KW"/>
</dbReference>
<dbReference type="FunFam" id="1.10.10.570:FF:000002">
    <property type="entry name" value="Vacuolar protein sorting-associated protein 25"/>
    <property type="match status" value="1"/>
</dbReference>
<dbReference type="FunFam" id="1.10.10.10:FF:000141">
    <property type="entry name" value="vacuolar protein-sorting-associated protein 25"/>
    <property type="match status" value="1"/>
</dbReference>
<dbReference type="Gene3D" id="1.10.10.570">
    <property type="entry name" value="Winged helix' DNA-binding domain. Chain C. Domain 1"/>
    <property type="match status" value="1"/>
</dbReference>
<dbReference type="Gene3D" id="1.10.10.10">
    <property type="entry name" value="Winged helix-like DNA-binding domain superfamily/Winged helix DNA-binding domain"/>
    <property type="match status" value="1"/>
</dbReference>
<dbReference type="InterPro" id="IPR008570">
    <property type="entry name" value="ESCRT-II_cplx_Vps25-sub"/>
</dbReference>
<dbReference type="InterPro" id="IPR014041">
    <property type="entry name" value="ESCRT-II_cplx_Vps25-sub_N"/>
</dbReference>
<dbReference type="InterPro" id="IPR036388">
    <property type="entry name" value="WH-like_DNA-bd_sf"/>
</dbReference>
<dbReference type="InterPro" id="IPR036390">
    <property type="entry name" value="WH_DNA-bd_sf"/>
</dbReference>
<dbReference type="PANTHER" id="PTHR13149">
    <property type="entry name" value="VACUOLAR PROTEIN SORTING-ASSOCIATED PROTEIN VPS25"/>
    <property type="match status" value="1"/>
</dbReference>
<dbReference type="PANTHER" id="PTHR13149:SF0">
    <property type="entry name" value="VACUOLAR PROTEIN-SORTING-ASSOCIATED PROTEIN 25"/>
    <property type="match status" value="1"/>
</dbReference>
<dbReference type="Pfam" id="PF05871">
    <property type="entry name" value="ESCRT-II"/>
    <property type="match status" value="1"/>
</dbReference>
<dbReference type="SUPFAM" id="SSF46785">
    <property type="entry name" value="Winged helix' DNA-binding domain"/>
    <property type="match status" value="2"/>
</dbReference>
<gene>
    <name type="primary">VPS25</name>
    <name type="ordered locus">At4g19003</name>
    <name type="ORF">F13C5</name>
</gene>
<comment type="function">
    <text evidence="1">Component of the ESCRT-II complex (endosomal sorting complex required for transport II), which is required for multivesicular body (MVB) formation and sorting of endosomal cargo proteins into MVBs. The ESCRT-II complex is probably involved in the recruitment of the ESCRT-III complex (By similarity).</text>
</comment>
<comment type="subunit">
    <text evidence="1">Component of the ESCRT-II complex (endosomal sorting complex required for transport II), composed of VPS22, VPS25 and VPS36.</text>
</comment>
<comment type="interaction">
    <interactant intactId="EBI-3865350">
        <id>Q8VZC9</id>
    </interactant>
    <interactant intactId="EBI-3865286">
        <id>Q8GXN6</id>
        <label>VPS20.1</label>
    </interactant>
    <organismsDiffer>false</organismsDiffer>
    <experiments>4</experiments>
</comment>
<comment type="interaction">
    <interactant intactId="EBI-3865350">
        <id>Q8VZC9</id>
    </interactant>
    <interactant intactId="EBI-3865360">
        <id>Q9FY89</id>
        <label>VPS20.2</label>
    </interactant>
    <organismsDiffer>false</organismsDiffer>
    <experiments>7</experiments>
</comment>
<comment type="subcellular location">
    <subcellularLocation>
        <location evidence="1">Endosome</location>
    </subcellularLocation>
</comment>
<comment type="similarity">
    <text evidence="2">Belongs to the VPS25 family.</text>
</comment>